<keyword id="KW-0997">Cell inner membrane</keyword>
<keyword id="KW-1003">Cell membrane</keyword>
<keyword id="KW-0472">Membrane</keyword>
<keyword id="KW-1185">Reference proteome</keyword>
<protein>
    <recommendedName>
        <fullName evidence="1">Putative membrane protein insertion efficiency factor</fullName>
    </recommendedName>
</protein>
<gene>
    <name type="ordered locus">Kole_0256</name>
</gene>
<feature type="chain" id="PRO_1000205786" description="Putative membrane protein insertion efficiency factor">
    <location>
        <begin position="1"/>
        <end position="80"/>
    </location>
</feature>
<proteinExistence type="inferred from homology"/>
<comment type="function">
    <text evidence="1">Could be involved in insertion of integral membrane proteins into the membrane.</text>
</comment>
<comment type="subcellular location">
    <subcellularLocation>
        <location evidence="1">Cell inner membrane</location>
        <topology evidence="1">Peripheral membrane protein</topology>
        <orientation evidence="1">Cytoplasmic side</orientation>
    </subcellularLocation>
</comment>
<comment type="similarity">
    <text evidence="1">Belongs to the UPF0161 family.</text>
</comment>
<evidence type="ECO:0000255" key="1">
    <source>
        <dbReference type="HAMAP-Rule" id="MF_00386"/>
    </source>
</evidence>
<organism>
    <name type="scientific">Kosmotoga olearia (strain ATCC BAA-1733 / DSM 21960 / TBF 19.5.1)</name>
    <dbReference type="NCBI Taxonomy" id="521045"/>
    <lineage>
        <taxon>Bacteria</taxon>
        <taxon>Thermotogati</taxon>
        <taxon>Thermotogota</taxon>
        <taxon>Thermotogae</taxon>
        <taxon>Kosmotogales</taxon>
        <taxon>Kosmotogaceae</taxon>
        <taxon>Kosmotoga</taxon>
    </lineage>
</organism>
<reference key="1">
    <citation type="submission" date="2009-06" db="EMBL/GenBank/DDBJ databases">
        <title>Complete sequence of Thermotogales bacterium TBF 19.5.1.</title>
        <authorList>
            <consortium name="US DOE Joint Genome Institute"/>
            <person name="Lucas S."/>
            <person name="Copeland A."/>
            <person name="Lapidus A."/>
            <person name="Glavina del Rio T."/>
            <person name="Tice H."/>
            <person name="Bruce D."/>
            <person name="Goodwin L."/>
            <person name="Pitluck S."/>
            <person name="Chertkov O."/>
            <person name="Brettin T."/>
            <person name="Detter J.C."/>
            <person name="Han C."/>
            <person name="Schmutz J."/>
            <person name="Larimer F."/>
            <person name="Land M."/>
            <person name="Hauser L."/>
            <person name="Kyrpides N."/>
            <person name="Ovchinnikova G."/>
            <person name="Noll K."/>
        </authorList>
    </citation>
    <scope>NUCLEOTIDE SEQUENCE [LARGE SCALE GENOMIC DNA]</scope>
    <source>
        <strain>ATCC BAA-1733 / DSM 21960 / TBF 19.5.1</strain>
    </source>
</reference>
<accession>C5CD37</accession>
<name>YIDD_KOSOT</name>
<sequence length="80" mass="9364">MKKIVLTLINFYRKYISPSKPPTCRFTPTCSAYTFEAVQRFGVFKGLLLGTWRILRCNPFNKGGYDPVPEEFKLLRRNTK</sequence>
<dbReference type="EMBL" id="CP001634">
    <property type="protein sequence ID" value="ACR78981.1"/>
    <property type="molecule type" value="Genomic_DNA"/>
</dbReference>
<dbReference type="STRING" id="521045.Kole_0256"/>
<dbReference type="KEGG" id="kol:Kole_0256"/>
<dbReference type="eggNOG" id="COG0759">
    <property type="taxonomic scope" value="Bacteria"/>
</dbReference>
<dbReference type="HOGENOM" id="CLU_144811_6_0_0"/>
<dbReference type="OrthoDB" id="9801753at2"/>
<dbReference type="Proteomes" id="UP000002382">
    <property type="component" value="Chromosome"/>
</dbReference>
<dbReference type="GO" id="GO:0005886">
    <property type="term" value="C:plasma membrane"/>
    <property type="evidence" value="ECO:0007669"/>
    <property type="project" value="UniProtKB-SubCell"/>
</dbReference>
<dbReference type="HAMAP" id="MF_00386">
    <property type="entry name" value="UPF0161_YidD"/>
    <property type="match status" value="1"/>
</dbReference>
<dbReference type="InterPro" id="IPR002696">
    <property type="entry name" value="Membr_insert_effic_factor_YidD"/>
</dbReference>
<dbReference type="NCBIfam" id="TIGR00278">
    <property type="entry name" value="membrane protein insertion efficiency factor YidD"/>
    <property type="match status" value="1"/>
</dbReference>
<dbReference type="PANTHER" id="PTHR33383">
    <property type="entry name" value="MEMBRANE PROTEIN INSERTION EFFICIENCY FACTOR-RELATED"/>
    <property type="match status" value="1"/>
</dbReference>
<dbReference type="PANTHER" id="PTHR33383:SF1">
    <property type="entry name" value="MEMBRANE PROTEIN INSERTION EFFICIENCY FACTOR-RELATED"/>
    <property type="match status" value="1"/>
</dbReference>
<dbReference type="Pfam" id="PF01809">
    <property type="entry name" value="YidD"/>
    <property type="match status" value="1"/>
</dbReference>
<dbReference type="SMART" id="SM01234">
    <property type="entry name" value="Haemolytic"/>
    <property type="match status" value="1"/>
</dbReference>